<name>ATF1_HUMAN</name>
<dbReference type="EMBL" id="X55544">
    <property type="protein sequence ID" value="CAA39150.1"/>
    <property type="molecule type" value="Genomic_DNA"/>
</dbReference>
<dbReference type="EMBL" id="AK299240">
    <property type="protein sequence ID" value="BAG61271.1"/>
    <property type="molecule type" value="mRNA"/>
</dbReference>
<dbReference type="EMBL" id="AC013244">
    <property type="status" value="NOT_ANNOTATED_CDS"/>
    <property type="molecule type" value="Genomic_DNA"/>
</dbReference>
<dbReference type="EMBL" id="BC029619">
    <property type="protein sequence ID" value="AAH29619.1"/>
    <property type="molecule type" value="mRNA"/>
</dbReference>
<dbReference type="EMBL" id="AJ295163">
    <property type="protein sequence ID" value="CAC15058.1"/>
    <property type="status" value="ALT_INIT"/>
    <property type="molecule type" value="mRNA"/>
</dbReference>
<dbReference type="CCDS" id="CCDS8803.1">
    <molecule id="P18846-1"/>
</dbReference>
<dbReference type="PIR" id="S12560">
    <property type="entry name" value="S12560"/>
</dbReference>
<dbReference type="RefSeq" id="NP_001399891.1">
    <molecule id="P18846-1"/>
    <property type="nucleotide sequence ID" value="NM_001412962.1"/>
</dbReference>
<dbReference type="RefSeq" id="NP_001399892.1">
    <molecule id="P18846-1"/>
    <property type="nucleotide sequence ID" value="NM_001412963.1"/>
</dbReference>
<dbReference type="RefSeq" id="NP_001399893.1">
    <molecule id="P18846-1"/>
    <property type="nucleotide sequence ID" value="NM_001412964.1"/>
</dbReference>
<dbReference type="RefSeq" id="NP_001399894.1">
    <molecule id="P18846-1"/>
    <property type="nucleotide sequence ID" value="NM_001412965.1"/>
</dbReference>
<dbReference type="RefSeq" id="NP_001399895.1">
    <molecule id="P18846-1"/>
    <property type="nucleotide sequence ID" value="NM_001412966.1"/>
</dbReference>
<dbReference type="RefSeq" id="NP_001399896.1">
    <molecule id="P18846-1"/>
    <property type="nucleotide sequence ID" value="NM_001412967.1"/>
</dbReference>
<dbReference type="RefSeq" id="NP_001399907.1">
    <molecule id="P18846-2"/>
    <property type="nucleotide sequence ID" value="NM_001412978.1"/>
</dbReference>
<dbReference type="RefSeq" id="NP_001399908.1">
    <molecule id="P18846-2"/>
    <property type="nucleotide sequence ID" value="NM_001412979.1"/>
</dbReference>
<dbReference type="RefSeq" id="NP_001399909.1">
    <molecule id="P18846-2"/>
    <property type="nucleotide sequence ID" value="NM_001412980.1"/>
</dbReference>
<dbReference type="RefSeq" id="NP_001399910.1">
    <molecule id="P18846-2"/>
    <property type="nucleotide sequence ID" value="NM_001412981.1"/>
</dbReference>
<dbReference type="RefSeq" id="NP_001399911.1">
    <molecule id="P18846-2"/>
    <property type="nucleotide sequence ID" value="NM_001412982.1"/>
</dbReference>
<dbReference type="RefSeq" id="NP_005162.1">
    <molecule id="P18846-1"/>
    <property type="nucleotide sequence ID" value="NM_005171.5"/>
</dbReference>
<dbReference type="RefSeq" id="XP_011536688.1">
    <molecule id="P18846-1"/>
    <property type="nucleotide sequence ID" value="XM_011538386.3"/>
</dbReference>
<dbReference type="RefSeq" id="XP_011536689.1">
    <property type="nucleotide sequence ID" value="XM_011538387.2"/>
</dbReference>
<dbReference type="RefSeq" id="XP_016874821.1">
    <property type="nucleotide sequence ID" value="XM_017019332.1"/>
</dbReference>
<dbReference type="RefSeq" id="XP_016874822.1">
    <property type="nucleotide sequence ID" value="XM_017019333.1"/>
</dbReference>
<dbReference type="RefSeq" id="XP_016874823.1">
    <property type="nucleotide sequence ID" value="XM_017019334.1"/>
</dbReference>
<dbReference type="RefSeq" id="XP_054228083.1">
    <molecule id="P18846-1"/>
    <property type="nucleotide sequence ID" value="XM_054372108.1"/>
</dbReference>
<dbReference type="SMR" id="P18846"/>
<dbReference type="BioGRID" id="106956">
    <property type="interactions" value="56"/>
</dbReference>
<dbReference type="ComplexPortal" id="CPX-6401">
    <property type="entry name" value="bZIP transcription factor complex, ATF1-ATF1"/>
</dbReference>
<dbReference type="ComplexPortal" id="CPX-6402">
    <property type="entry name" value="bZIP transcription factor complex, ATF1-BACH1"/>
</dbReference>
<dbReference type="ComplexPortal" id="CPX-6404">
    <property type="entry name" value="bZIP transcription factor complex, ATF1-NFIL3"/>
</dbReference>
<dbReference type="ComplexPortal" id="CPX-6405">
    <property type="entry name" value="bZIP transcription factor complex, ATF1-CREB1"/>
</dbReference>
<dbReference type="ComplexPortal" id="CPX-9">
    <property type="entry name" value="bZIP transcription factor complex, ATF1-ATF4"/>
</dbReference>
<dbReference type="DIP" id="DIP-652N"/>
<dbReference type="FunCoup" id="P18846">
    <property type="interactions" value="4029"/>
</dbReference>
<dbReference type="IntAct" id="P18846">
    <property type="interactions" value="38"/>
</dbReference>
<dbReference type="MINT" id="P18846"/>
<dbReference type="STRING" id="9606.ENSP00000262053"/>
<dbReference type="BindingDB" id="P18846"/>
<dbReference type="ChEMBL" id="CHEMBL3255"/>
<dbReference type="DrugBank" id="DB00852">
    <property type="generic name" value="Pseudoephedrine"/>
</dbReference>
<dbReference type="GlyCosmos" id="P18846">
    <property type="glycosylation" value="10 sites, 2 glycans"/>
</dbReference>
<dbReference type="GlyGen" id="P18846">
    <property type="glycosylation" value="16 sites, 1 N-linked glycan (1 site), 2 O-linked glycans (15 sites)"/>
</dbReference>
<dbReference type="iPTMnet" id="P18846"/>
<dbReference type="PhosphoSitePlus" id="P18846"/>
<dbReference type="BioMuta" id="ATF1"/>
<dbReference type="DMDM" id="1168542"/>
<dbReference type="jPOST" id="P18846"/>
<dbReference type="MassIVE" id="P18846"/>
<dbReference type="PaxDb" id="9606-ENSP00000262053"/>
<dbReference type="PeptideAtlas" id="P18846"/>
<dbReference type="ProteomicsDB" id="4950"/>
<dbReference type="ProteomicsDB" id="53610">
    <molecule id="P18846-1"/>
</dbReference>
<dbReference type="Pumba" id="P18846"/>
<dbReference type="ABCD" id="P18846">
    <property type="antibodies" value="1 sequenced antibody"/>
</dbReference>
<dbReference type="Antibodypedia" id="4260">
    <property type="antibodies" value="702 antibodies from 43 providers"/>
</dbReference>
<dbReference type="DNASU" id="466"/>
<dbReference type="Ensembl" id="ENST00000262053.8">
    <molecule id="P18846-1"/>
    <property type="protein sequence ID" value="ENSP00000262053.3"/>
    <property type="gene ID" value="ENSG00000123268.9"/>
</dbReference>
<dbReference type="GeneID" id="466"/>
<dbReference type="KEGG" id="hsa:466"/>
<dbReference type="MANE-Select" id="ENST00000262053.8">
    <property type="protein sequence ID" value="ENSP00000262053.3"/>
    <property type="RefSeq nucleotide sequence ID" value="NM_005171.5"/>
    <property type="RefSeq protein sequence ID" value="NP_005162.1"/>
</dbReference>
<dbReference type="UCSC" id="uc001rww.5">
    <molecule id="P18846-1"/>
    <property type="organism name" value="human"/>
</dbReference>
<dbReference type="AGR" id="HGNC:783"/>
<dbReference type="CTD" id="466"/>
<dbReference type="DisGeNET" id="466"/>
<dbReference type="GeneCards" id="ATF1"/>
<dbReference type="HGNC" id="HGNC:783">
    <property type="gene designation" value="ATF1"/>
</dbReference>
<dbReference type="HPA" id="ENSG00000123268">
    <property type="expression patterns" value="Low tissue specificity"/>
</dbReference>
<dbReference type="MalaCards" id="ATF1"/>
<dbReference type="MIM" id="123803">
    <property type="type" value="gene"/>
</dbReference>
<dbReference type="MIM" id="612160">
    <property type="type" value="phenotype"/>
</dbReference>
<dbReference type="neXtProt" id="NX_P18846"/>
<dbReference type="OpenTargets" id="ENSG00000123268"/>
<dbReference type="Orphanet" id="97338">
    <property type="disease" value="Melanoma of soft tissue"/>
</dbReference>
<dbReference type="PharmGKB" id="PA25083"/>
<dbReference type="VEuPathDB" id="HostDB:ENSG00000123268"/>
<dbReference type="eggNOG" id="KOG3584">
    <property type="taxonomic scope" value="Eukaryota"/>
</dbReference>
<dbReference type="GeneTree" id="ENSGT00940000158200"/>
<dbReference type="HOGENOM" id="CLU_042675_1_0_1"/>
<dbReference type="InParanoid" id="P18846"/>
<dbReference type="OMA" id="AVQGTHI"/>
<dbReference type="OrthoDB" id="5970722at2759"/>
<dbReference type="PAN-GO" id="P18846">
    <property type="GO annotations" value="4 GO annotations based on evolutionary models"/>
</dbReference>
<dbReference type="PhylomeDB" id="P18846"/>
<dbReference type="TreeFam" id="TF106464"/>
<dbReference type="PathwayCommons" id="P18846"/>
<dbReference type="Reactome" id="R-HSA-199920">
    <property type="pathway name" value="CREB phosphorylation"/>
</dbReference>
<dbReference type="Reactome" id="R-HSA-9031628">
    <property type="pathway name" value="NGF-stimulated transcription"/>
</dbReference>
<dbReference type="SignaLink" id="P18846"/>
<dbReference type="SIGNOR" id="P18846"/>
<dbReference type="BioGRID-ORCS" id="466">
    <property type="hits" value="28 hits in 1178 CRISPR screens"/>
</dbReference>
<dbReference type="ChiTaRS" id="ATF1">
    <property type="organism name" value="human"/>
</dbReference>
<dbReference type="GeneWiki" id="ATF1"/>
<dbReference type="GenomeRNAi" id="466"/>
<dbReference type="Pharos" id="P18846">
    <property type="development level" value="Tchem"/>
</dbReference>
<dbReference type="PRO" id="PR:P18846"/>
<dbReference type="Proteomes" id="UP000005640">
    <property type="component" value="Chromosome 12"/>
</dbReference>
<dbReference type="RNAct" id="P18846">
    <property type="molecule type" value="protein"/>
</dbReference>
<dbReference type="Bgee" id="ENSG00000123268">
    <property type="expression patterns" value="Expressed in germinal epithelium of ovary and 207 other cell types or tissues"/>
</dbReference>
<dbReference type="ExpressionAtlas" id="P18846">
    <property type="expression patterns" value="baseline and differential"/>
</dbReference>
<dbReference type="GO" id="GO:1990590">
    <property type="term" value="C:ATF1-ATF4 transcription factor complex"/>
    <property type="evidence" value="ECO:0000314"/>
    <property type="project" value="ParkinsonsUK-UCL"/>
</dbReference>
<dbReference type="GO" id="GO:1990589">
    <property type="term" value="C:ATF4-CREB1 transcription factor complex"/>
    <property type="evidence" value="ECO:0000318"/>
    <property type="project" value="GO_Central"/>
</dbReference>
<dbReference type="GO" id="GO:0000785">
    <property type="term" value="C:chromatin"/>
    <property type="evidence" value="ECO:0000247"/>
    <property type="project" value="NTNU_SB"/>
</dbReference>
<dbReference type="GO" id="GO:0005654">
    <property type="term" value="C:nucleoplasm"/>
    <property type="evidence" value="ECO:0000314"/>
    <property type="project" value="HPA"/>
</dbReference>
<dbReference type="GO" id="GO:0005634">
    <property type="term" value="C:nucleus"/>
    <property type="evidence" value="ECO:0000314"/>
    <property type="project" value="MGI"/>
</dbReference>
<dbReference type="GO" id="GO:0090575">
    <property type="term" value="C:RNA polymerase II transcription regulator complex"/>
    <property type="evidence" value="ECO:0000353"/>
    <property type="project" value="ComplexPortal"/>
</dbReference>
<dbReference type="GO" id="GO:0001228">
    <property type="term" value="F:DNA-binding transcription activator activity, RNA polymerase II-specific"/>
    <property type="evidence" value="ECO:0000314"/>
    <property type="project" value="NTNU_SB"/>
</dbReference>
<dbReference type="GO" id="GO:0003700">
    <property type="term" value="F:DNA-binding transcription factor activity"/>
    <property type="evidence" value="ECO:0000304"/>
    <property type="project" value="ProtInc"/>
</dbReference>
<dbReference type="GO" id="GO:0000981">
    <property type="term" value="F:DNA-binding transcription factor activity, RNA polymerase II-specific"/>
    <property type="evidence" value="ECO:0000247"/>
    <property type="project" value="NTNU_SB"/>
</dbReference>
<dbReference type="GO" id="GO:0042802">
    <property type="term" value="F:identical protein binding"/>
    <property type="evidence" value="ECO:0000353"/>
    <property type="project" value="IntAct"/>
</dbReference>
<dbReference type="GO" id="GO:0044877">
    <property type="term" value="F:protein-containing complex binding"/>
    <property type="evidence" value="ECO:0007669"/>
    <property type="project" value="Ensembl"/>
</dbReference>
<dbReference type="GO" id="GO:0000978">
    <property type="term" value="F:RNA polymerase II cis-regulatory region sequence-specific DNA binding"/>
    <property type="evidence" value="ECO:0000318"/>
    <property type="project" value="GO_Central"/>
</dbReference>
<dbReference type="GO" id="GO:0000977">
    <property type="term" value="F:RNA polymerase II transcription regulatory region sequence-specific DNA binding"/>
    <property type="evidence" value="ECO:0000314"/>
    <property type="project" value="NTNU_SB"/>
</dbReference>
<dbReference type="GO" id="GO:0141156">
    <property type="term" value="P:cAMP/PKA signal transduction"/>
    <property type="evidence" value="ECO:0000314"/>
    <property type="project" value="MGI"/>
</dbReference>
<dbReference type="GO" id="GO:0045740">
    <property type="term" value="P:positive regulation of DNA replication"/>
    <property type="evidence" value="ECO:0007669"/>
    <property type="project" value="Ensembl"/>
</dbReference>
<dbReference type="GO" id="GO:0010976">
    <property type="term" value="P:positive regulation of neuron projection development"/>
    <property type="evidence" value="ECO:0007669"/>
    <property type="project" value="Ensembl"/>
</dbReference>
<dbReference type="GO" id="GO:0045944">
    <property type="term" value="P:positive regulation of transcription by RNA polymerase II"/>
    <property type="evidence" value="ECO:0000314"/>
    <property type="project" value="NTNU_SB"/>
</dbReference>
<dbReference type="GO" id="GO:0065003">
    <property type="term" value="P:protein-containing complex assembly"/>
    <property type="evidence" value="ECO:0007669"/>
    <property type="project" value="Ensembl"/>
</dbReference>
<dbReference type="GO" id="GO:0006357">
    <property type="term" value="P:regulation of transcription by RNA polymerase II"/>
    <property type="evidence" value="ECO:0000314"/>
    <property type="project" value="ComplexPortal"/>
</dbReference>
<dbReference type="GO" id="GO:0032025">
    <property type="term" value="P:response to cobalt ion"/>
    <property type="evidence" value="ECO:0007669"/>
    <property type="project" value="Ensembl"/>
</dbReference>
<dbReference type="GO" id="GO:0014074">
    <property type="term" value="P:response to purine-containing compound"/>
    <property type="evidence" value="ECO:0000314"/>
    <property type="project" value="MGI"/>
</dbReference>
<dbReference type="CDD" id="cd14690">
    <property type="entry name" value="bZIP_CREB1"/>
    <property type="match status" value="1"/>
</dbReference>
<dbReference type="FunFam" id="1.20.5.170:FF:000003">
    <property type="entry name" value="cAMP-responsive element modulator isoform X2"/>
    <property type="match status" value="1"/>
</dbReference>
<dbReference type="Gene3D" id="1.20.5.170">
    <property type="match status" value="1"/>
</dbReference>
<dbReference type="InterPro" id="IPR004827">
    <property type="entry name" value="bZIP"/>
</dbReference>
<dbReference type="InterPro" id="IPR046347">
    <property type="entry name" value="bZIP_sf"/>
</dbReference>
<dbReference type="InterPro" id="IPR003102">
    <property type="entry name" value="CREB1-like_pKID"/>
</dbReference>
<dbReference type="InterPro" id="IPR001630">
    <property type="entry name" value="Leuzip_CREB"/>
</dbReference>
<dbReference type="PANTHER" id="PTHR45879">
    <property type="entry name" value="CYCLIC AMP RESPONSE ELEMENT-BINDING PROTEIN B"/>
    <property type="match status" value="1"/>
</dbReference>
<dbReference type="PANTHER" id="PTHR45879:SF2">
    <property type="entry name" value="CYCLIC AMP-DEPENDENT TRANSCRIPTION FACTOR ATF-1"/>
    <property type="match status" value="1"/>
</dbReference>
<dbReference type="Pfam" id="PF00170">
    <property type="entry name" value="bZIP_1"/>
    <property type="match status" value="1"/>
</dbReference>
<dbReference type="Pfam" id="PF02173">
    <property type="entry name" value="pKID"/>
    <property type="match status" value="1"/>
</dbReference>
<dbReference type="PRINTS" id="PR00041">
    <property type="entry name" value="LEUZIPPRCREB"/>
</dbReference>
<dbReference type="SMART" id="SM00338">
    <property type="entry name" value="BRLZ"/>
    <property type="match status" value="1"/>
</dbReference>
<dbReference type="SUPFAM" id="SSF57959">
    <property type="entry name" value="Leucine zipper domain"/>
    <property type="match status" value="1"/>
</dbReference>
<dbReference type="PROSITE" id="PS50217">
    <property type="entry name" value="BZIP"/>
    <property type="match status" value="1"/>
</dbReference>
<dbReference type="PROSITE" id="PS00036">
    <property type="entry name" value="BZIP_BASIC"/>
    <property type="match status" value="1"/>
</dbReference>
<dbReference type="PROSITE" id="PS50953">
    <property type="entry name" value="KID"/>
    <property type="match status" value="1"/>
</dbReference>
<proteinExistence type="evidence at protein level"/>
<evidence type="ECO:0000255" key="1">
    <source>
        <dbReference type="PROSITE-ProRule" id="PRU00312"/>
    </source>
</evidence>
<evidence type="ECO:0000255" key="2">
    <source>
        <dbReference type="PROSITE-ProRule" id="PRU00978"/>
    </source>
</evidence>
<evidence type="ECO:0000256" key="3">
    <source>
        <dbReference type="SAM" id="MobiDB-lite"/>
    </source>
</evidence>
<evidence type="ECO:0000269" key="4">
    <source>
    </source>
</evidence>
<evidence type="ECO:0000269" key="5">
    <source>
    </source>
</evidence>
<evidence type="ECO:0000269" key="6">
    <source>
    </source>
</evidence>
<evidence type="ECO:0000269" key="7">
    <source>
    </source>
</evidence>
<evidence type="ECO:0000269" key="8">
    <source>
    </source>
</evidence>
<evidence type="ECO:0000303" key="9">
    <source>
    </source>
</evidence>
<evidence type="ECO:0000305" key="10"/>
<evidence type="ECO:0000305" key="11">
    <source>
    </source>
</evidence>
<evidence type="ECO:0000305" key="12">
    <source>
    </source>
</evidence>
<evidence type="ECO:0007744" key="13">
    <source>
    </source>
</evidence>
<evidence type="ECO:0007744" key="14">
    <source>
    </source>
</evidence>
<evidence type="ECO:0007744" key="15">
    <source>
    </source>
</evidence>
<evidence type="ECO:0007744" key="16">
    <source>
    </source>
</evidence>
<feature type="chain" id="PRO_0000076575" description="Cyclic AMP-dependent transcription factor ATF-1">
    <location>
        <begin position="1"/>
        <end position="271"/>
    </location>
</feature>
<feature type="domain" description="KID" evidence="1">
    <location>
        <begin position="31"/>
        <end position="90"/>
    </location>
</feature>
<feature type="domain" description="bZIP" evidence="2">
    <location>
        <begin position="213"/>
        <end position="271"/>
    </location>
</feature>
<feature type="region of interest" description="Disordered" evidence="3">
    <location>
        <begin position="1"/>
        <end position="61"/>
    </location>
</feature>
<feature type="region of interest" description="Basic motif" evidence="2">
    <location>
        <begin position="215"/>
        <end position="239"/>
    </location>
</feature>
<feature type="region of interest" description="Leucine-zipper" evidence="2">
    <location>
        <begin position="241"/>
        <end position="262"/>
    </location>
</feature>
<feature type="site" description="Breakpoint for translocation to form chimeric EWSR1/ATF1 protein">
    <location>
        <position position="110"/>
    </location>
</feature>
<feature type="site" description="Breakpoint for translocation to form chimeric FUS/ATF1 protein">
    <location>
        <position position="112"/>
    </location>
</feature>
<feature type="modified residue" description="Phosphoserine; by CaMK1, CDK3, RPS6KA4 and RPS6KA5" evidence="11 12">
    <location>
        <position position="63"/>
    </location>
</feature>
<feature type="modified residue" description="Phosphoserine; by HIPK2" evidence="1 5 13 14 15">
    <location>
        <position position="198"/>
    </location>
</feature>
<feature type="cross-link" description="Glycyl lysine isopeptide (Lys-Gly) (interchain with G-Cter in SUMO2)" evidence="16">
    <location>
        <position position="208"/>
    </location>
</feature>
<feature type="cross-link" description="Glycyl lysine isopeptide (Lys-Gly) (interchain with G-Cter in SUMO2)" evidence="16">
    <location>
        <position position="215"/>
    </location>
</feature>
<feature type="splice variant" id="VSP_055559" description="In isoform 2." evidence="9">
    <location>
        <begin position="1"/>
        <end position="135"/>
    </location>
</feature>
<feature type="sequence variant" id="VAR_024382" description="In dbSNP:rs2230674.">
    <original>P</original>
    <variation>A</variation>
    <location>
        <position position="191"/>
    </location>
</feature>
<feature type="mutagenesis site" description="Impaired CDK3-mediated phosphorylation and altered transactivation and transcriptional activities." evidence="4">
    <original>S</original>
    <variation>A</variation>
    <location>
        <position position="63"/>
    </location>
</feature>
<feature type="sequence conflict" description="In Ref. 6; no nucleotide entry." evidence="10" ref="6">
    <original>H</original>
    <variation>A</variation>
    <location>
        <position position="55"/>
    </location>
</feature>
<feature type="sequence conflict" description="In Ref. 6; no nucleotide entry." evidence="10" ref="6">
    <location>
        <position position="227"/>
    </location>
</feature>
<reference key="1">
    <citation type="journal article" date="1990" name="EMBO J.">
        <title>Multiple cDNA clones encoding nuclear proteins that bind to the tax-dependent enhancer of HTLV-1: all contain a leucine zipper structure and basic amino acid domain.</title>
        <authorList>
            <person name="Yoshimura T."/>
            <person name="Fujisawa J."/>
            <person name="Yoshida M."/>
        </authorList>
    </citation>
    <scope>NUCLEOTIDE SEQUENCE [GENOMIC DNA]</scope>
</reference>
<reference key="2">
    <citation type="journal article" date="1991" name="J. Biol. Chem.">
        <title>The cAMP-regulated enhancer-binding protein ATF-1 activates transcription in response to cAMP-dependent protein kinase A.</title>
        <authorList>
            <person name="Rehfuss R.P."/>
            <person name="Walton K.M."/>
            <person name="Loriaux M.M."/>
            <person name="Goodman R.H."/>
        </authorList>
    </citation>
    <scope>NUCLEOTIDE SEQUENCE [MRNA] (ISOFORM 1)</scope>
</reference>
<reference key="3">
    <citation type="journal article" date="2004" name="Nat. Genet.">
        <title>Complete sequencing and characterization of 21,243 full-length human cDNAs.</title>
        <authorList>
            <person name="Ota T."/>
            <person name="Suzuki Y."/>
            <person name="Nishikawa T."/>
            <person name="Otsuki T."/>
            <person name="Sugiyama T."/>
            <person name="Irie R."/>
            <person name="Wakamatsu A."/>
            <person name="Hayashi K."/>
            <person name="Sato H."/>
            <person name="Nagai K."/>
            <person name="Kimura K."/>
            <person name="Makita H."/>
            <person name="Sekine M."/>
            <person name="Obayashi M."/>
            <person name="Nishi T."/>
            <person name="Shibahara T."/>
            <person name="Tanaka T."/>
            <person name="Ishii S."/>
            <person name="Yamamoto J."/>
            <person name="Saito K."/>
            <person name="Kawai Y."/>
            <person name="Isono Y."/>
            <person name="Nakamura Y."/>
            <person name="Nagahari K."/>
            <person name="Murakami K."/>
            <person name="Yasuda T."/>
            <person name="Iwayanagi T."/>
            <person name="Wagatsuma M."/>
            <person name="Shiratori A."/>
            <person name="Sudo H."/>
            <person name="Hosoiri T."/>
            <person name="Kaku Y."/>
            <person name="Kodaira H."/>
            <person name="Kondo H."/>
            <person name="Sugawara M."/>
            <person name="Takahashi M."/>
            <person name="Kanda K."/>
            <person name="Yokoi T."/>
            <person name="Furuya T."/>
            <person name="Kikkawa E."/>
            <person name="Omura Y."/>
            <person name="Abe K."/>
            <person name="Kamihara K."/>
            <person name="Katsuta N."/>
            <person name="Sato K."/>
            <person name="Tanikawa M."/>
            <person name="Yamazaki M."/>
            <person name="Ninomiya K."/>
            <person name="Ishibashi T."/>
            <person name="Yamashita H."/>
            <person name="Murakawa K."/>
            <person name="Fujimori K."/>
            <person name="Tanai H."/>
            <person name="Kimata M."/>
            <person name="Watanabe M."/>
            <person name="Hiraoka S."/>
            <person name="Chiba Y."/>
            <person name="Ishida S."/>
            <person name="Ono Y."/>
            <person name="Takiguchi S."/>
            <person name="Watanabe S."/>
            <person name="Yosida M."/>
            <person name="Hotuta T."/>
            <person name="Kusano J."/>
            <person name="Kanehori K."/>
            <person name="Takahashi-Fujii A."/>
            <person name="Hara H."/>
            <person name="Tanase T.-O."/>
            <person name="Nomura Y."/>
            <person name="Togiya S."/>
            <person name="Komai F."/>
            <person name="Hara R."/>
            <person name="Takeuchi K."/>
            <person name="Arita M."/>
            <person name="Imose N."/>
            <person name="Musashino K."/>
            <person name="Yuuki H."/>
            <person name="Oshima A."/>
            <person name="Sasaki N."/>
            <person name="Aotsuka S."/>
            <person name="Yoshikawa Y."/>
            <person name="Matsunawa H."/>
            <person name="Ichihara T."/>
            <person name="Shiohata N."/>
            <person name="Sano S."/>
            <person name="Moriya S."/>
            <person name="Momiyama H."/>
            <person name="Satoh N."/>
            <person name="Takami S."/>
            <person name="Terashima Y."/>
            <person name="Suzuki O."/>
            <person name="Nakagawa S."/>
            <person name="Senoh A."/>
            <person name="Mizoguchi H."/>
            <person name="Goto Y."/>
            <person name="Shimizu F."/>
            <person name="Wakebe H."/>
            <person name="Hishigaki H."/>
            <person name="Watanabe T."/>
            <person name="Sugiyama A."/>
            <person name="Takemoto M."/>
            <person name="Kawakami B."/>
            <person name="Yamazaki M."/>
            <person name="Watanabe K."/>
            <person name="Kumagai A."/>
            <person name="Itakura S."/>
            <person name="Fukuzumi Y."/>
            <person name="Fujimori Y."/>
            <person name="Komiyama M."/>
            <person name="Tashiro H."/>
            <person name="Tanigami A."/>
            <person name="Fujiwara T."/>
            <person name="Ono T."/>
            <person name="Yamada K."/>
            <person name="Fujii Y."/>
            <person name="Ozaki K."/>
            <person name="Hirao M."/>
            <person name="Ohmori Y."/>
            <person name="Kawabata A."/>
            <person name="Hikiji T."/>
            <person name="Kobatake N."/>
            <person name="Inagaki H."/>
            <person name="Ikema Y."/>
            <person name="Okamoto S."/>
            <person name="Okitani R."/>
            <person name="Kawakami T."/>
            <person name="Noguchi S."/>
            <person name="Itoh T."/>
            <person name="Shigeta K."/>
            <person name="Senba T."/>
            <person name="Matsumura K."/>
            <person name="Nakajima Y."/>
            <person name="Mizuno T."/>
            <person name="Morinaga M."/>
            <person name="Sasaki M."/>
            <person name="Togashi T."/>
            <person name="Oyama M."/>
            <person name="Hata H."/>
            <person name="Watanabe M."/>
            <person name="Komatsu T."/>
            <person name="Mizushima-Sugano J."/>
            <person name="Satoh T."/>
            <person name="Shirai Y."/>
            <person name="Takahashi Y."/>
            <person name="Nakagawa K."/>
            <person name="Okumura K."/>
            <person name="Nagase T."/>
            <person name="Nomura N."/>
            <person name="Kikuchi H."/>
            <person name="Masuho Y."/>
            <person name="Yamashita R."/>
            <person name="Nakai K."/>
            <person name="Yada T."/>
            <person name="Nakamura Y."/>
            <person name="Ohara O."/>
            <person name="Isogai T."/>
            <person name="Sugano S."/>
        </authorList>
    </citation>
    <scope>NUCLEOTIDE SEQUENCE [LARGE SCALE MRNA] (ISOFORM 2)</scope>
</reference>
<reference key="4">
    <citation type="journal article" date="2006" name="Nature">
        <title>The finished DNA sequence of human chromosome 12.</title>
        <authorList>
            <person name="Scherer S.E."/>
            <person name="Muzny D.M."/>
            <person name="Buhay C.J."/>
            <person name="Chen R."/>
            <person name="Cree A."/>
            <person name="Ding Y."/>
            <person name="Dugan-Rocha S."/>
            <person name="Gill R."/>
            <person name="Gunaratne P."/>
            <person name="Harris R.A."/>
            <person name="Hawes A.C."/>
            <person name="Hernandez J."/>
            <person name="Hodgson A.V."/>
            <person name="Hume J."/>
            <person name="Jackson A."/>
            <person name="Khan Z.M."/>
            <person name="Kovar-Smith C."/>
            <person name="Lewis L.R."/>
            <person name="Lozado R.J."/>
            <person name="Metzker M.L."/>
            <person name="Milosavljevic A."/>
            <person name="Miner G.R."/>
            <person name="Montgomery K.T."/>
            <person name="Morgan M.B."/>
            <person name="Nazareth L.V."/>
            <person name="Scott G."/>
            <person name="Sodergren E."/>
            <person name="Song X.-Z."/>
            <person name="Steffen D."/>
            <person name="Lovering R.C."/>
            <person name="Wheeler D.A."/>
            <person name="Worley K.C."/>
            <person name="Yuan Y."/>
            <person name="Zhang Z."/>
            <person name="Adams C.Q."/>
            <person name="Ansari-Lari M.A."/>
            <person name="Ayele M."/>
            <person name="Brown M.J."/>
            <person name="Chen G."/>
            <person name="Chen Z."/>
            <person name="Clerc-Blankenburg K.P."/>
            <person name="Davis C."/>
            <person name="Delgado O."/>
            <person name="Dinh H.H."/>
            <person name="Draper H."/>
            <person name="Gonzalez-Garay M.L."/>
            <person name="Havlak P."/>
            <person name="Jackson L.R."/>
            <person name="Jacob L.S."/>
            <person name="Kelly S.H."/>
            <person name="Li L."/>
            <person name="Li Z."/>
            <person name="Liu J."/>
            <person name="Liu W."/>
            <person name="Lu J."/>
            <person name="Maheshwari M."/>
            <person name="Nguyen B.-V."/>
            <person name="Okwuonu G.O."/>
            <person name="Pasternak S."/>
            <person name="Perez L.M."/>
            <person name="Plopper F.J.H."/>
            <person name="Santibanez J."/>
            <person name="Shen H."/>
            <person name="Tabor P.E."/>
            <person name="Verduzco D."/>
            <person name="Waldron L."/>
            <person name="Wang Q."/>
            <person name="Williams G.A."/>
            <person name="Zhang J."/>
            <person name="Zhou J."/>
            <person name="Allen C.C."/>
            <person name="Amin A.G."/>
            <person name="Anyalebechi V."/>
            <person name="Bailey M."/>
            <person name="Barbaria J.A."/>
            <person name="Bimage K.E."/>
            <person name="Bryant N.P."/>
            <person name="Burch P.E."/>
            <person name="Burkett C.E."/>
            <person name="Burrell K.L."/>
            <person name="Calderon E."/>
            <person name="Cardenas V."/>
            <person name="Carter K."/>
            <person name="Casias K."/>
            <person name="Cavazos I."/>
            <person name="Cavazos S.R."/>
            <person name="Ceasar H."/>
            <person name="Chacko J."/>
            <person name="Chan S.N."/>
            <person name="Chavez D."/>
            <person name="Christopoulos C."/>
            <person name="Chu J."/>
            <person name="Cockrell R."/>
            <person name="Cox C.D."/>
            <person name="Dang M."/>
            <person name="Dathorne S.R."/>
            <person name="David R."/>
            <person name="Davis C.M."/>
            <person name="Davy-Carroll L."/>
            <person name="Deshazo D.R."/>
            <person name="Donlin J.E."/>
            <person name="D'Souza L."/>
            <person name="Eaves K.A."/>
            <person name="Egan A."/>
            <person name="Emery-Cohen A.J."/>
            <person name="Escotto M."/>
            <person name="Flagg N."/>
            <person name="Forbes L.D."/>
            <person name="Gabisi A.M."/>
            <person name="Garza M."/>
            <person name="Hamilton C."/>
            <person name="Henderson N."/>
            <person name="Hernandez O."/>
            <person name="Hines S."/>
            <person name="Hogues M.E."/>
            <person name="Huang M."/>
            <person name="Idlebird D.G."/>
            <person name="Johnson R."/>
            <person name="Jolivet A."/>
            <person name="Jones S."/>
            <person name="Kagan R."/>
            <person name="King L.M."/>
            <person name="Leal B."/>
            <person name="Lebow H."/>
            <person name="Lee S."/>
            <person name="LeVan J.M."/>
            <person name="Lewis L.C."/>
            <person name="London P."/>
            <person name="Lorensuhewa L.M."/>
            <person name="Loulseged H."/>
            <person name="Lovett D.A."/>
            <person name="Lucier A."/>
            <person name="Lucier R.L."/>
            <person name="Ma J."/>
            <person name="Madu R.C."/>
            <person name="Mapua P."/>
            <person name="Martindale A.D."/>
            <person name="Martinez E."/>
            <person name="Massey E."/>
            <person name="Mawhiney S."/>
            <person name="Meador M.G."/>
            <person name="Mendez S."/>
            <person name="Mercado C."/>
            <person name="Mercado I.C."/>
            <person name="Merritt C.E."/>
            <person name="Miner Z.L."/>
            <person name="Minja E."/>
            <person name="Mitchell T."/>
            <person name="Mohabbat F."/>
            <person name="Mohabbat K."/>
            <person name="Montgomery B."/>
            <person name="Moore N."/>
            <person name="Morris S."/>
            <person name="Munidasa M."/>
            <person name="Ngo R.N."/>
            <person name="Nguyen N.B."/>
            <person name="Nickerson E."/>
            <person name="Nwaokelemeh O.O."/>
            <person name="Nwokenkwo S."/>
            <person name="Obregon M."/>
            <person name="Oguh M."/>
            <person name="Oragunye N."/>
            <person name="Oviedo R.J."/>
            <person name="Parish B.J."/>
            <person name="Parker D.N."/>
            <person name="Parrish J."/>
            <person name="Parks K.L."/>
            <person name="Paul H.A."/>
            <person name="Payton B.A."/>
            <person name="Perez A."/>
            <person name="Perrin W."/>
            <person name="Pickens A."/>
            <person name="Primus E.L."/>
            <person name="Pu L.-L."/>
            <person name="Puazo M."/>
            <person name="Quiles M.M."/>
            <person name="Quiroz J.B."/>
            <person name="Rabata D."/>
            <person name="Reeves K."/>
            <person name="Ruiz S.J."/>
            <person name="Shao H."/>
            <person name="Sisson I."/>
            <person name="Sonaike T."/>
            <person name="Sorelle R.P."/>
            <person name="Sutton A.E."/>
            <person name="Svatek A.F."/>
            <person name="Svetz L.A."/>
            <person name="Tamerisa K.S."/>
            <person name="Taylor T.R."/>
            <person name="Teague B."/>
            <person name="Thomas N."/>
            <person name="Thorn R.D."/>
            <person name="Trejos Z.Y."/>
            <person name="Trevino B.K."/>
            <person name="Ukegbu O.N."/>
            <person name="Urban J.B."/>
            <person name="Vasquez L.I."/>
            <person name="Vera V.A."/>
            <person name="Villasana D.M."/>
            <person name="Wang L."/>
            <person name="Ward-Moore S."/>
            <person name="Warren J.T."/>
            <person name="Wei X."/>
            <person name="White F."/>
            <person name="Williamson A.L."/>
            <person name="Wleczyk R."/>
            <person name="Wooden H.S."/>
            <person name="Wooden S.H."/>
            <person name="Yen J."/>
            <person name="Yoon L."/>
            <person name="Yoon V."/>
            <person name="Zorrilla S.E."/>
            <person name="Nelson D."/>
            <person name="Kucherlapati R."/>
            <person name="Weinstock G."/>
            <person name="Gibbs R.A."/>
        </authorList>
    </citation>
    <scope>NUCLEOTIDE SEQUENCE [LARGE SCALE GENOMIC DNA]</scope>
</reference>
<reference key="5">
    <citation type="journal article" date="2004" name="Genome Res.">
        <title>The status, quality, and expansion of the NIH full-length cDNA project: the Mammalian Gene Collection (MGC).</title>
        <authorList>
            <consortium name="The MGC Project Team"/>
        </authorList>
    </citation>
    <scope>NUCLEOTIDE SEQUENCE [LARGE SCALE MRNA] (ISOFORM 1)</scope>
    <source>
        <tissue>Bone marrow</tissue>
    </source>
</reference>
<reference key="6">
    <citation type="journal article" date="1989" name="Genes Dev.">
        <title>Transcription factor ATF cDNA clones: an extensive family of leucine zipper proteins able to selectively form DNA-binding heterodimers.</title>
        <authorList>
            <person name="Hai T."/>
            <person name="Liu F."/>
            <person name="Coukos W.J."/>
            <person name="Green M.R."/>
        </authorList>
    </citation>
    <scope>NUCLEOTIDE SEQUENCE [MRNA] OF 39-271 (ISOFORM 1)</scope>
</reference>
<reference key="7">
    <citation type="journal article" date="1990" name="Genes Dev.">
        <authorList>
            <person name="Hai T."/>
            <person name="Liu F."/>
            <person name="Coukos W.J."/>
            <person name="Green M.R."/>
        </authorList>
    </citation>
    <scope>ERRATUM OF PUBMED:2516827</scope>
</reference>
<reference key="8">
    <citation type="journal article" date="2000" name="Cancer Genet. Cytogenet.">
        <title>Genetic characterization of angiomatoid fibrous histiocytoma identifies fusion of the FUS and ATF-1 genes induced by a chromosomal translocation involving bands 12q13 and 16p11.</title>
        <authorList>
            <person name="Waters B.L."/>
            <person name="Panagopoulos I."/>
            <person name="Allen E.F."/>
        </authorList>
    </citation>
    <scope>NUCLEOTIDE SEQUENCE [MRNA] OF 22-246 (ISOFORM 1)</scope>
    <scope>CHROMOSOMAL TRANSLOCATION WITH FUS</scope>
    <scope>ASSOCIATION WITH ANGIOMATOID FIBROUS HISTIOCYTOMA</scope>
</reference>
<reference key="9">
    <citation type="journal article" date="1996" name="J. Biol. Chem.">
        <title>Regulation of activating transcription factor-1 and the cAMP response element-binding protein by Ca2+/calmodulin-dependent protein kinases type I, II, and IV.</title>
        <authorList>
            <person name="Sun P."/>
            <person name="Lou L."/>
            <person name="Maurer R.A."/>
        </authorList>
    </citation>
    <scope>PHOSPHORYLATION AT SER-63</scope>
    <scope>PHOSPHORYLATION BY CAMK1</scope>
</reference>
<reference key="10">
    <citation type="journal article" date="2005" name="Genes Chromosomes Cancer">
        <title>Fusion of the EWSR1 and ATF1 genes without expression of the MITF-M transcript in angiomatoid fibrous histiocytoma.</title>
        <authorList>
            <person name="Hallor K.H."/>
            <person name="Mertens F."/>
            <person name="Jin Y."/>
            <person name="Meis-Kindblom J.M."/>
            <person name="Kindblom L.-G."/>
            <person name="Behrendtz M."/>
            <person name="Kalen A."/>
            <person name="Mandahl N."/>
            <person name="Panagopoulos I."/>
        </authorList>
    </citation>
    <scope>CHROMOSOMAL TRANSLOCATION WITH EWSR1</scope>
    <scope>ASSOCIATION WITH ANGIOMATOID FIBROUS HISTIOCYTOMA</scope>
</reference>
<reference key="11">
    <citation type="journal article" date="2008" name="Cancer Res.">
        <title>Cyclin-dependent kinase 3-mediated activating transcription factor 1 phosphorylation enhances cell transformation.</title>
        <authorList>
            <person name="Zheng D."/>
            <person name="Cho Y.-Y."/>
            <person name="Lau A.T.Y."/>
            <person name="Zhang J."/>
            <person name="Ma W.-Y."/>
            <person name="Bode A.M."/>
            <person name="Dong Z."/>
        </authorList>
    </citation>
    <scope>FUNCTION</scope>
    <scope>PHOSPHORYLATION AT SER-63 BY CDK3</scope>
    <scope>INTERACTION WITH CDK3</scope>
    <scope>MUTAGENESIS OF SER-63</scope>
</reference>
<reference key="12">
    <citation type="journal article" date="2008" name="Proc. Natl. Acad. Sci. U.S.A.">
        <title>A quantitative atlas of mitotic phosphorylation.</title>
        <authorList>
            <person name="Dephoure N."/>
            <person name="Zhou C."/>
            <person name="Villen J."/>
            <person name="Beausoleil S.A."/>
            <person name="Bakalarski C.E."/>
            <person name="Elledge S.J."/>
            <person name="Gygi S.P."/>
        </authorList>
    </citation>
    <scope>PHOSPHORYLATION [LARGE SCALE ANALYSIS] AT SER-198</scope>
    <scope>IDENTIFICATION BY MASS SPECTROMETRY [LARGE SCALE ANALYSIS]</scope>
    <source>
        <tissue>Cervix carcinoma</tissue>
    </source>
</reference>
<reference key="13">
    <citation type="journal article" date="2009" name="Sci. Signal.">
        <title>Quantitative phosphoproteomic analysis of T cell receptor signaling reveals system-wide modulation of protein-protein interactions.</title>
        <authorList>
            <person name="Mayya V."/>
            <person name="Lundgren D.H."/>
            <person name="Hwang S.-I."/>
            <person name="Rezaul K."/>
            <person name="Wu L."/>
            <person name="Eng J.K."/>
            <person name="Rodionov V."/>
            <person name="Han D.K."/>
        </authorList>
    </citation>
    <scope>PHOSPHORYLATION [LARGE SCALE ANALYSIS] AT SER-198</scope>
    <scope>IDENTIFICATION BY MASS SPECTROMETRY [LARGE SCALE ANALYSIS]</scope>
    <source>
        <tissue>Leukemic T-cell</tissue>
    </source>
</reference>
<reference key="14">
    <citation type="journal article" date="2010" name="J. Cell Sci.">
        <title>Transcriptional regulation of ferritin and antioxidant genes by HIPK2 under genotoxic stress.</title>
        <authorList>
            <person name="Hailemariam K."/>
            <person name="Iwasaki K."/>
            <person name="Huang B.W."/>
            <person name="Sakamoto K."/>
            <person name="Tsuji Y."/>
        </authorList>
    </citation>
    <scope>FUNCTION AS REPRESSOR</scope>
    <scope>PHOSPHORYLATION AT SER-198 BY HIPK2</scope>
    <scope>INTERACTION WITH HIPK2</scope>
</reference>
<reference key="15">
    <citation type="journal article" date="2010" name="Sci. Signal.">
        <title>Quantitative phosphoproteomics reveals widespread full phosphorylation site occupancy during mitosis.</title>
        <authorList>
            <person name="Olsen J.V."/>
            <person name="Vermeulen M."/>
            <person name="Santamaria A."/>
            <person name="Kumar C."/>
            <person name="Miller M.L."/>
            <person name="Jensen L.J."/>
            <person name="Gnad F."/>
            <person name="Cox J."/>
            <person name="Jensen T.S."/>
            <person name="Nigg E.A."/>
            <person name="Brunak S."/>
            <person name="Mann M."/>
        </authorList>
    </citation>
    <scope>IDENTIFICATION BY MASS SPECTROMETRY [LARGE SCALE ANALYSIS]</scope>
    <source>
        <tissue>Cervix carcinoma</tissue>
    </source>
</reference>
<reference key="16">
    <citation type="journal article" date="2013" name="J. Proteome Res.">
        <title>Toward a comprehensive characterization of a human cancer cell phosphoproteome.</title>
        <authorList>
            <person name="Zhou H."/>
            <person name="Di Palma S."/>
            <person name="Preisinger C."/>
            <person name="Peng M."/>
            <person name="Polat A.N."/>
            <person name="Heck A.J."/>
            <person name="Mohammed S."/>
        </authorList>
    </citation>
    <scope>PHOSPHORYLATION [LARGE SCALE ANALYSIS] AT SER-198</scope>
    <scope>IDENTIFICATION BY MASS SPECTROMETRY [LARGE SCALE ANALYSIS]</scope>
    <source>
        <tissue>Cervix carcinoma</tissue>
        <tissue>Erythroleukemia</tissue>
    </source>
</reference>
<reference key="17">
    <citation type="journal article" date="2017" name="Nat. Struct. Mol. Biol.">
        <title>Site-specific mapping of the human SUMO proteome reveals co-modification with phosphorylation.</title>
        <authorList>
            <person name="Hendriks I.A."/>
            <person name="Lyon D."/>
            <person name="Young C."/>
            <person name="Jensen L.J."/>
            <person name="Vertegaal A.C."/>
            <person name="Nielsen M.L."/>
        </authorList>
    </citation>
    <scope>SUMOYLATION [LARGE SCALE ANALYSIS] AT LYS-208 AND LYS-215</scope>
    <scope>IDENTIFICATION BY MASS SPECTROMETRY [LARGE SCALE ANALYSIS]</scope>
</reference>
<reference key="18">
    <citation type="journal article" date="2018" name="Cell Metab.">
        <title>The Mitochondrial-Encoded Peptide MOTS-c Translocates to the Nucleus to Regulate Nuclear Gene Expression in Response to Metabolic Stress.</title>
        <authorList>
            <person name="Kim K.H."/>
            <person name="Son J.M."/>
            <person name="Benayoun B.A."/>
            <person name="Lee C."/>
        </authorList>
    </citation>
    <scope>INTERACTION WITH MOTS-C</scope>
    <scope>SUBCELLULAR LOCATION</scope>
</reference>
<gene>
    <name type="primary">ATF1</name>
</gene>
<protein>
    <recommendedName>
        <fullName>Cyclic AMP-dependent transcription factor ATF-1</fullName>
        <shortName>cAMP-dependent transcription factor ATF-1</shortName>
    </recommendedName>
    <alternativeName>
        <fullName>Activating transcription factor 1</fullName>
    </alternativeName>
    <alternativeName>
        <fullName>Protein TREB36</fullName>
    </alternativeName>
</protein>
<accession>P18846</accession>
<accession>B4DRF9</accession>
<accession>P25168</accession>
<accession>Q9H4A8</accession>
<keyword id="KW-0010">Activator</keyword>
<keyword id="KW-0025">Alternative splicing</keyword>
<keyword id="KW-0160">Chromosomal rearrangement</keyword>
<keyword id="KW-0238">DNA-binding</keyword>
<keyword id="KW-1017">Isopeptide bond</keyword>
<keyword id="KW-0539">Nucleus</keyword>
<keyword id="KW-0597">Phosphoprotein</keyword>
<keyword id="KW-1267">Proteomics identification</keyword>
<keyword id="KW-1185">Reference proteome</keyword>
<keyword id="KW-0804">Transcription</keyword>
<keyword id="KW-0805">Transcription regulation</keyword>
<keyword id="KW-0832">Ubl conjugation</keyword>
<comment type="function">
    <text evidence="4 5">This protein binds the cAMP response element (CRE) (consensus: 5'-GTGACGT[AC][AG]-3'), a sequence present in many viral and cellular promoters. Binds to the Tax-responsive element (TRE) of HTLV-I. Mediates PKA-induced stimulation of CRE-reporter genes. Represses the expression of FTH1 and other antioxidant detoxification genes. Triggers cell proliferation and transformation.</text>
</comment>
<comment type="subunit">
    <text evidence="4 5 6 7">Binds DNA as a dimer (PubMed:2516827). Interacts with HIPK2 and CDK3 (PubMed:18794154, PubMed:20980392). Interacts with MOTS-c, a peptide produced by the mitochondrially encoded 12S rRNA MT-RNR1; the interaction occurs in the nucleus following metabolic stress (PubMed:29983246).</text>
</comment>
<comment type="interaction">
    <interactant intactId="EBI-852794">
        <id>P18846</id>
    </interactant>
    <interactant intactId="EBI-852794">
        <id>P18846</id>
        <label>ATF1</label>
    </interactant>
    <organismsDiffer>false</organismsDiffer>
    <experiments>2</experiments>
</comment>
<comment type="interaction">
    <interactant intactId="EBI-852794">
        <id>P18846</id>
    </interactant>
    <interactant intactId="EBI-711855">
        <id>P16220</id>
        <label>CREB1</label>
    </interactant>
    <organismsDiffer>false</organismsDiffer>
    <experiments>6</experiments>
</comment>
<comment type="interaction">
    <interactant intactId="EBI-852794">
        <id>P18846</id>
    </interactant>
    <interactant intactId="EBI-78473">
        <id>P03372</id>
        <label>ESR1</label>
    </interactant>
    <organismsDiffer>false</organismsDiffer>
    <experiments>3</experiments>
</comment>
<comment type="interaction">
    <interactant intactId="EBI-852794">
        <id>P18846</id>
    </interactant>
    <interactant intactId="EBI-852823">
        <id>P05412</id>
        <label>JUN</label>
    </interactant>
    <organismsDiffer>false</organismsDiffer>
    <experiments>2</experiments>
</comment>
<comment type="interaction">
    <interactant intactId="EBI-852794">
        <id>P18846</id>
    </interactant>
    <interactant intactId="EBI-6907210">
        <id>O95644</id>
        <label>NFATC1</label>
    </interactant>
    <organismsDiffer>false</organismsDiffer>
    <experiments>3</experiments>
</comment>
<comment type="interaction">
    <interactant intactId="EBI-852794">
        <id>P18846</id>
    </interactant>
    <interactant intactId="EBI-3951858">
        <id>Q16649</id>
        <label>NFIL3</label>
    </interactant>
    <organismsDiffer>false</organismsDiffer>
    <experiments>3</experiments>
</comment>
<comment type="interaction">
    <interactant intactId="EBI-852794">
        <id>P18846</id>
    </interactant>
    <interactant intactId="EBI-10890294">
        <id>P0C746</id>
        <label>HBZ</label>
    </interactant>
    <organismsDiffer>true</organismsDiffer>
    <experiments>2</experiments>
</comment>
<comment type="interaction">
    <interactant intactId="EBI-852794">
        <id>P18846</id>
    </interactant>
    <interactant intactId="EBI-10889526">
        <id>Q9DGW5</id>
        <label>MDV005</label>
    </interactant>
    <organismsDiffer>true</organismsDiffer>
    <experiments>2</experiments>
</comment>
<comment type="interaction">
    <interactant intactId="EBI-852794">
        <id>P18846</id>
    </interactant>
    <interactant intactId="EBI-7225021">
        <id>P03259-2</id>
    </interactant>
    <organismsDiffer>true</organismsDiffer>
    <experiments>2</experiments>
</comment>
<comment type="subcellular location">
    <subcellularLocation>
        <location evidence="7">Nucleus</location>
    </subcellularLocation>
</comment>
<comment type="alternative products">
    <event type="alternative splicing"/>
    <isoform>
        <id>P18846-1</id>
        <name>1</name>
        <sequence type="displayed"/>
    </isoform>
    <isoform>
        <id>P18846-2</id>
        <name>2</name>
        <sequence type="described" ref="VSP_055559"/>
    </isoform>
</comment>
<comment type="PTM">
    <text evidence="4 5 8">Phosphorylated at Ser-198 by HIPK2 in response to genotoxic stress. This phosphorylation promotes transcription repression of FTH1 and other antioxidant detoxification genes. The CDK3-mediated phosphorylation at Ser-63 promotes its transactivation and transcriptional activities. Phosphorylated at Ser-63 by RPS6KA4 and RPS6KA5 in response to mitogenic or stress stimuli.</text>
</comment>
<comment type="disease">
    <disease id="DI-02611">
        <name>Angiomatoid fibrous histiocytoma</name>
        <acronym>AFH</acronym>
        <description>A distinct variant of malignant fibrous histiocytoma that typically occurs in children and adolescents and is manifest by nodular subcutaneous growth. Characteristic microscopic features include lobulated sheets of histiocyte-like cells intimately associated with areas of hemorrhage and cystic pseudovascular spaces, as well as a striking cuffing of inflammatory cells, mimicking a lymph node metastasis.</description>
        <dbReference type="MIM" id="612160"/>
    </disease>
    <text>The gene represented in this entry may be involved in disease pathogenesis. Chromosomal aberrations involving ATF1 are found in patients with angiomatoid fibrous histiocytoma. Translocation t(12;16)(q13;p11.2) with FUS generates a chimeric ATF1/FUS protein. Translocation t(12;22)(q13;q12) with EWSR1 generates a chimeric ATF1/EWSR1 protein.</text>
</comment>
<comment type="similarity">
    <text evidence="10">Belongs to the bZIP family. ATF subfamily.</text>
</comment>
<comment type="sequence caution" evidence="10">
    <conflict type="erroneous initiation">
        <sequence resource="EMBL-CDS" id="CAC15058"/>
    </conflict>
</comment>
<comment type="online information" name="Atlas of Genetics and Cytogenetics in Oncology and Haematology">
    <link uri="https://atlasgeneticsoncology.org/gene/81/ATF1"/>
</comment>
<organism>
    <name type="scientific">Homo sapiens</name>
    <name type="common">Human</name>
    <dbReference type="NCBI Taxonomy" id="9606"/>
    <lineage>
        <taxon>Eukaryota</taxon>
        <taxon>Metazoa</taxon>
        <taxon>Chordata</taxon>
        <taxon>Craniata</taxon>
        <taxon>Vertebrata</taxon>
        <taxon>Euteleostomi</taxon>
        <taxon>Mammalia</taxon>
        <taxon>Eutheria</taxon>
        <taxon>Euarchontoglires</taxon>
        <taxon>Primates</taxon>
        <taxon>Haplorrhini</taxon>
        <taxon>Catarrhini</taxon>
        <taxon>Hominidae</taxon>
        <taxon>Homo</taxon>
    </lineage>
</organism>
<sequence>MEDSHKSTTSETAPQPGSAVQGAHISHIAQQVSSLSESEESQDSSDSIGSSQKAHGILARRPSYRKILKDLSSEDTRGRKGDGENSGVSAAVTSMSVPTPIYQTSSGQYIAIAPNGALQLASPGTDGVQGLQTLTMTNSGSTQQGTTILQYAQTSDGQQILVPSNQVVVQTASGDMQTYQIRTTPSATSLPQTVVMTSPVTLTSQTTKTDDPQLKREIRLMKNREAARECRRKKKEYVKCLENRVAVLENQNKTLIEELKTLKDLYSNKSV</sequence>